<proteinExistence type="inferred from homology"/>
<reference key="1">
    <citation type="journal article" date="2009" name="PLoS ONE">
        <title>Genome degradation in Brucella ovis corresponds with narrowing of its host range and tissue tropism.</title>
        <authorList>
            <person name="Tsolis R.M."/>
            <person name="Seshadri R."/>
            <person name="Santos R.L."/>
            <person name="Sangari F.J."/>
            <person name="Lobo J.M."/>
            <person name="de Jong M.F."/>
            <person name="Ren Q."/>
            <person name="Myers G."/>
            <person name="Brinkac L.M."/>
            <person name="Nelson W.C."/>
            <person name="Deboy R.T."/>
            <person name="Angiuoli S."/>
            <person name="Khouri H."/>
            <person name="Dimitrov G."/>
            <person name="Robinson J.R."/>
            <person name="Mulligan S."/>
            <person name="Walker R.L."/>
            <person name="Elzer P.E."/>
            <person name="Hassan K.A."/>
            <person name="Paulsen I.T."/>
        </authorList>
    </citation>
    <scope>NUCLEOTIDE SEQUENCE [LARGE SCALE GENOMIC DNA]</scope>
    <source>
        <strain>ATCC 25840 / 63/290 / NCTC 10512</strain>
    </source>
</reference>
<dbReference type="EC" id="2.7.7.6" evidence="1"/>
<dbReference type="EMBL" id="CP000708">
    <property type="protein sequence ID" value="ABQ61781.1"/>
    <property type="molecule type" value="Genomic_DNA"/>
</dbReference>
<dbReference type="RefSeq" id="WP_006012770.1">
    <property type="nucleotide sequence ID" value="NC_009505.1"/>
</dbReference>
<dbReference type="SMR" id="A5VQY2"/>
<dbReference type="GeneID" id="45124577"/>
<dbReference type="KEGG" id="bov:BOV_1172"/>
<dbReference type="HOGENOM" id="CLU_053084_0_0_5"/>
<dbReference type="PhylomeDB" id="A5VQY2"/>
<dbReference type="PRO" id="PR:A5VQY2"/>
<dbReference type="Proteomes" id="UP000006383">
    <property type="component" value="Chromosome I"/>
</dbReference>
<dbReference type="GO" id="GO:0005737">
    <property type="term" value="C:cytoplasm"/>
    <property type="evidence" value="ECO:0007669"/>
    <property type="project" value="UniProtKB-ARBA"/>
</dbReference>
<dbReference type="GO" id="GO:0000428">
    <property type="term" value="C:DNA-directed RNA polymerase complex"/>
    <property type="evidence" value="ECO:0007669"/>
    <property type="project" value="UniProtKB-KW"/>
</dbReference>
<dbReference type="GO" id="GO:0003677">
    <property type="term" value="F:DNA binding"/>
    <property type="evidence" value="ECO:0007669"/>
    <property type="project" value="UniProtKB-UniRule"/>
</dbReference>
<dbReference type="GO" id="GO:0003899">
    <property type="term" value="F:DNA-directed RNA polymerase activity"/>
    <property type="evidence" value="ECO:0007669"/>
    <property type="project" value="UniProtKB-UniRule"/>
</dbReference>
<dbReference type="GO" id="GO:0046983">
    <property type="term" value="F:protein dimerization activity"/>
    <property type="evidence" value="ECO:0007669"/>
    <property type="project" value="InterPro"/>
</dbReference>
<dbReference type="GO" id="GO:0006351">
    <property type="term" value="P:DNA-templated transcription"/>
    <property type="evidence" value="ECO:0007669"/>
    <property type="project" value="UniProtKB-UniRule"/>
</dbReference>
<dbReference type="CDD" id="cd06928">
    <property type="entry name" value="RNAP_alpha_NTD"/>
    <property type="match status" value="1"/>
</dbReference>
<dbReference type="FunFam" id="1.10.150.20:FF:000001">
    <property type="entry name" value="DNA-directed RNA polymerase subunit alpha"/>
    <property type="match status" value="1"/>
</dbReference>
<dbReference type="FunFam" id="2.170.120.12:FF:000001">
    <property type="entry name" value="DNA-directed RNA polymerase subunit alpha"/>
    <property type="match status" value="1"/>
</dbReference>
<dbReference type="Gene3D" id="1.10.150.20">
    <property type="entry name" value="5' to 3' exonuclease, C-terminal subdomain"/>
    <property type="match status" value="1"/>
</dbReference>
<dbReference type="Gene3D" id="2.170.120.12">
    <property type="entry name" value="DNA-directed RNA polymerase, insert domain"/>
    <property type="match status" value="1"/>
</dbReference>
<dbReference type="Gene3D" id="3.30.1360.10">
    <property type="entry name" value="RNA polymerase, RBP11-like subunit"/>
    <property type="match status" value="1"/>
</dbReference>
<dbReference type="HAMAP" id="MF_00059">
    <property type="entry name" value="RNApol_bact_RpoA"/>
    <property type="match status" value="1"/>
</dbReference>
<dbReference type="InterPro" id="IPR011262">
    <property type="entry name" value="DNA-dir_RNA_pol_insert"/>
</dbReference>
<dbReference type="InterPro" id="IPR011263">
    <property type="entry name" value="DNA-dir_RNA_pol_RpoA/D/Rpb3"/>
</dbReference>
<dbReference type="InterPro" id="IPR011773">
    <property type="entry name" value="DNA-dir_RpoA"/>
</dbReference>
<dbReference type="InterPro" id="IPR036603">
    <property type="entry name" value="RBP11-like"/>
</dbReference>
<dbReference type="InterPro" id="IPR011260">
    <property type="entry name" value="RNAP_asu_C"/>
</dbReference>
<dbReference type="InterPro" id="IPR036643">
    <property type="entry name" value="RNApol_insert_sf"/>
</dbReference>
<dbReference type="NCBIfam" id="NF003513">
    <property type="entry name" value="PRK05182.1-2"/>
    <property type="match status" value="1"/>
</dbReference>
<dbReference type="NCBIfam" id="NF003519">
    <property type="entry name" value="PRK05182.2-5"/>
    <property type="match status" value="1"/>
</dbReference>
<dbReference type="NCBIfam" id="TIGR02027">
    <property type="entry name" value="rpoA"/>
    <property type="match status" value="1"/>
</dbReference>
<dbReference type="Pfam" id="PF01000">
    <property type="entry name" value="RNA_pol_A_bac"/>
    <property type="match status" value="1"/>
</dbReference>
<dbReference type="Pfam" id="PF03118">
    <property type="entry name" value="RNA_pol_A_CTD"/>
    <property type="match status" value="1"/>
</dbReference>
<dbReference type="Pfam" id="PF01193">
    <property type="entry name" value="RNA_pol_L"/>
    <property type="match status" value="1"/>
</dbReference>
<dbReference type="SMART" id="SM00662">
    <property type="entry name" value="RPOLD"/>
    <property type="match status" value="1"/>
</dbReference>
<dbReference type="SUPFAM" id="SSF47789">
    <property type="entry name" value="C-terminal domain of RNA polymerase alpha subunit"/>
    <property type="match status" value="1"/>
</dbReference>
<dbReference type="SUPFAM" id="SSF56553">
    <property type="entry name" value="Insert subdomain of RNA polymerase alpha subunit"/>
    <property type="match status" value="1"/>
</dbReference>
<dbReference type="SUPFAM" id="SSF55257">
    <property type="entry name" value="RBP11-like subunits of RNA polymerase"/>
    <property type="match status" value="1"/>
</dbReference>
<sequence>MIQKNWQELIKPNKVDFITHGSRAHATVVAEPLERGFGLTLGNALRRVLLSSLRGAAVTAVQIDGVLHEFSSIPGVREDVTDIVLNIKEIAIRMEGEGPKRMVVRKEGPGVVTAGDIQTVGDVEILNPEHAICTLDEGAEICMEFTVNTGKGYVPADRNRAEDAPIGLIPVDSLYSPVRKVSYKIENTREGQVLDYDKLTLNIETNGSVTGEDAVAYAARILQDQLSIFVNFEEPQKEAPQEQVAELAFNPALLKKVDELELSVRSANCLKNDNIVYIGDLIQKTEAEMLRTPNFGRKSLNEIKEVLASMGLHLGMEIPAWPPENIEDLAKRYEDQY</sequence>
<keyword id="KW-0240">DNA-directed RNA polymerase</keyword>
<keyword id="KW-0548">Nucleotidyltransferase</keyword>
<keyword id="KW-0804">Transcription</keyword>
<keyword id="KW-0808">Transferase</keyword>
<protein>
    <recommendedName>
        <fullName evidence="1">DNA-directed RNA polymerase subunit alpha</fullName>
        <shortName evidence="1">RNAP subunit alpha</shortName>
        <ecNumber evidence="1">2.7.7.6</ecNumber>
    </recommendedName>
    <alternativeName>
        <fullName evidence="1">RNA polymerase subunit alpha</fullName>
    </alternativeName>
    <alternativeName>
        <fullName evidence="1">Transcriptase subunit alpha</fullName>
    </alternativeName>
</protein>
<organism>
    <name type="scientific">Brucella ovis (strain ATCC 25840 / 63/290 / NCTC 10512)</name>
    <dbReference type="NCBI Taxonomy" id="444178"/>
    <lineage>
        <taxon>Bacteria</taxon>
        <taxon>Pseudomonadati</taxon>
        <taxon>Pseudomonadota</taxon>
        <taxon>Alphaproteobacteria</taxon>
        <taxon>Hyphomicrobiales</taxon>
        <taxon>Brucellaceae</taxon>
        <taxon>Brucella/Ochrobactrum group</taxon>
        <taxon>Brucella</taxon>
    </lineage>
</organism>
<name>RPOA_BRUO2</name>
<evidence type="ECO:0000255" key="1">
    <source>
        <dbReference type="HAMAP-Rule" id="MF_00059"/>
    </source>
</evidence>
<accession>A5VQY2</accession>
<gene>
    <name evidence="1" type="primary">rpoA</name>
    <name type="ordered locus">BOV_1172</name>
</gene>
<comment type="function">
    <text evidence="1">DNA-dependent RNA polymerase catalyzes the transcription of DNA into RNA using the four ribonucleoside triphosphates as substrates.</text>
</comment>
<comment type="catalytic activity">
    <reaction evidence="1">
        <text>RNA(n) + a ribonucleoside 5'-triphosphate = RNA(n+1) + diphosphate</text>
        <dbReference type="Rhea" id="RHEA:21248"/>
        <dbReference type="Rhea" id="RHEA-COMP:14527"/>
        <dbReference type="Rhea" id="RHEA-COMP:17342"/>
        <dbReference type="ChEBI" id="CHEBI:33019"/>
        <dbReference type="ChEBI" id="CHEBI:61557"/>
        <dbReference type="ChEBI" id="CHEBI:140395"/>
        <dbReference type="EC" id="2.7.7.6"/>
    </reaction>
</comment>
<comment type="subunit">
    <text evidence="1">Homodimer. The RNAP catalytic core consists of 2 alpha, 1 beta, 1 beta' and 1 omega subunit. When a sigma factor is associated with the core the holoenzyme is formed, which can initiate transcription.</text>
</comment>
<comment type="domain">
    <text evidence="1">The N-terminal domain is essential for RNAP assembly and basal transcription, whereas the C-terminal domain is involved in interaction with transcriptional regulators and with upstream promoter elements.</text>
</comment>
<comment type="similarity">
    <text evidence="1">Belongs to the RNA polymerase alpha chain family.</text>
</comment>
<feature type="chain" id="PRO_1000007675" description="DNA-directed RNA polymerase subunit alpha">
    <location>
        <begin position="1"/>
        <end position="337"/>
    </location>
</feature>
<feature type="region of interest" description="Alpha N-terminal domain (alpha-NTD)" evidence="1">
    <location>
        <begin position="1"/>
        <end position="233"/>
    </location>
</feature>
<feature type="region of interest" description="Alpha C-terminal domain (alpha-CTD)" evidence="1">
    <location>
        <begin position="249"/>
        <end position="337"/>
    </location>
</feature>